<accession>Q5XD49</accession>
<accession>P82559</accession>
<proteinExistence type="evidence at protein level"/>
<comment type="function">
    <text evidence="2">GTP hydrolase that promotes the GTP-dependent binding of aminoacyl-tRNA to the A-site of ribosomes during protein biosynthesis.</text>
</comment>
<comment type="catalytic activity">
    <reaction evidence="2">
        <text>GTP + H2O = GDP + phosphate + H(+)</text>
        <dbReference type="Rhea" id="RHEA:19669"/>
        <dbReference type="ChEBI" id="CHEBI:15377"/>
        <dbReference type="ChEBI" id="CHEBI:15378"/>
        <dbReference type="ChEBI" id="CHEBI:37565"/>
        <dbReference type="ChEBI" id="CHEBI:43474"/>
        <dbReference type="ChEBI" id="CHEBI:58189"/>
        <dbReference type="EC" id="3.6.5.3"/>
    </reaction>
    <physiologicalReaction direction="left-to-right" evidence="2">
        <dbReference type="Rhea" id="RHEA:19670"/>
    </physiologicalReaction>
</comment>
<comment type="subunit">
    <text evidence="2">Monomer.</text>
</comment>
<comment type="subcellular location">
    <subcellularLocation>
        <location evidence="2">Cytoplasm</location>
    </subcellularLocation>
</comment>
<comment type="mass spectrometry"/>
<comment type="similarity">
    <text evidence="2">Belongs to the TRAFAC class translation factor GTPase superfamily. Classic translation factor GTPase family. EF-Tu/EF-1A subfamily.</text>
</comment>
<comment type="sequence caution" evidence="4">
    <conflict type="erroneous initiation">
        <sequence resource="EMBL-CDS" id="AAT86664"/>
    </conflict>
</comment>
<reference key="1">
    <citation type="journal article" date="2004" name="J. Infect. Dis.">
        <title>Progress toward characterization of the group A Streptococcus metagenome: complete genome sequence of a macrolide-resistant serotype M6 strain.</title>
        <authorList>
            <person name="Banks D.J."/>
            <person name="Porcella S.F."/>
            <person name="Barbian K.D."/>
            <person name="Beres S.B."/>
            <person name="Philips L.E."/>
            <person name="Voyich J.M."/>
            <person name="DeLeo F.R."/>
            <person name="Martin J.M."/>
            <person name="Somerville G.A."/>
            <person name="Musser J.M."/>
        </authorList>
    </citation>
    <scope>NUCLEOTIDE SEQUENCE [LARGE SCALE GENOMIC DNA]</scope>
    <source>
        <strain>ATCC BAA-946 / MGAS10394</strain>
    </source>
</reference>
<reference key="2">
    <citation type="submission" date="2000-05" db="UniProtKB">
        <title>Two-dimensional gel electrophoresis map of Streptococcus pyogenes proteins.</title>
        <authorList>
            <person name="Hogan D.A."/>
            <person name="Du P."/>
            <person name="Stevenson T.I."/>
            <person name="Whitton M."/>
            <person name="Kilby G.W."/>
            <person name="Rogers J."/>
            <person name="VanBogelen R.A."/>
        </authorList>
    </citation>
    <scope>PROTEIN SEQUENCE OF 26-38; 63-78; 159-180; 209-227; 242-256; 269-284 AND 309-318</scope>
    <scope>MASS SPECTROMETRY</scope>
    <source>
        <strain>JRS4 / Serotype M6</strain>
    </source>
</reference>
<evidence type="ECO:0000250" key="1"/>
<evidence type="ECO:0000255" key="2">
    <source>
        <dbReference type="HAMAP-Rule" id="MF_00118"/>
    </source>
</evidence>
<evidence type="ECO:0000269" key="3">
    <source ref="2"/>
</evidence>
<evidence type="ECO:0000305" key="4"/>
<sequence>MAKEKYDRSKPHVNIGTIGHVDHGKTTLTAAITTVLARRLPSSVNQPKDYASIDAAPEERERGITINTAHVEYETATRHYAHIDAPGHADYVKNMITGAAQMDGAILVVASTDGPMPQTREHILLSRQVGVKHLIVFMNKVDLVDDEELLELVEMEIRDLLSEYDFPGDDLPVIQGSALKALEGDTKFEDIIMELMDTVDSYIPEPERDTDKPLLLPVEDVFSITGRGTVASGRIDRGTVRVNDEIEIVGIKEETKKAVVTGVEMFRKQLDEGLAGDNVGILLRGVQRDEIERGQVIAKPGSINPHTKFKGEVYILSKDEGGRHTPFFNNYRPQFYFRTTDVTGSIELPAGTEMVMPGDNVTINVELIHPIAVEQGTTFSIREGGRTVGSGIVSEIEA</sequence>
<gene>
    <name evidence="2" type="primary">tuf</name>
    <name type="ordered locus">M6_Spy0529</name>
</gene>
<protein>
    <recommendedName>
        <fullName evidence="2">Elongation factor Tu</fullName>
        <shortName evidence="2">EF-Tu</shortName>
        <ecNumber evidence="2">3.6.5.3</ecNumber>
    </recommendedName>
</protein>
<keyword id="KW-0963">Cytoplasm</keyword>
<keyword id="KW-0903">Direct protein sequencing</keyword>
<keyword id="KW-0251">Elongation factor</keyword>
<keyword id="KW-0342">GTP-binding</keyword>
<keyword id="KW-0378">Hydrolase</keyword>
<keyword id="KW-0460">Magnesium</keyword>
<keyword id="KW-0479">Metal-binding</keyword>
<keyword id="KW-0547">Nucleotide-binding</keyword>
<keyword id="KW-0648">Protein biosynthesis</keyword>
<dbReference type="EC" id="3.6.5.3" evidence="2"/>
<dbReference type="EMBL" id="CP000003">
    <property type="protein sequence ID" value="AAT86664.1"/>
    <property type="status" value="ALT_INIT"/>
    <property type="molecule type" value="Genomic_DNA"/>
</dbReference>
<dbReference type="RefSeq" id="WP_002990541.1">
    <property type="nucleotide sequence ID" value="NC_006086.1"/>
</dbReference>
<dbReference type="SMR" id="Q5XD49"/>
<dbReference type="KEGG" id="spa:M6_Spy0529"/>
<dbReference type="HOGENOM" id="CLU_007265_0_1_9"/>
<dbReference type="Proteomes" id="UP000001167">
    <property type="component" value="Chromosome"/>
</dbReference>
<dbReference type="GO" id="GO:0005829">
    <property type="term" value="C:cytosol"/>
    <property type="evidence" value="ECO:0007669"/>
    <property type="project" value="TreeGrafter"/>
</dbReference>
<dbReference type="GO" id="GO:0005525">
    <property type="term" value="F:GTP binding"/>
    <property type="evidence" value="ECO:0007669"/>
    <property type="project" value="UniProtKB-UniRule"/>
</dbReference>
<dbReference type="GO" id="GO:0003924">
    <property type="term" value="F:GTPase activity"/>
    <property type="evidence" value="ECO:0007669"/>
    <property type="project" value="InterPro"/>
</dbReference>
<dbReference type="GO" id="GO:0003746">
    <property type="term" value="F:translation elongation factor activity"/>
    <property type="evidence" value="ECO:0007669"/>
    <property type="project" value="UniProtKB-UniRule"/>
</dbReference>
<dbReference type="CDD" id="cd01884">
    <property type="entry name" value="EF_Tu"/>
    <property type="match status" value="1"/>
</dbReference>
<dbReference type="CDD" id="cd03697">
    <property type="entry name" value="EFTU_II"/>
    <property type="match status" value="1"/>
</dbReference>
<dbReference type="CDD" id="cd03707">
    <property type="entry name" value="EFTU_III"/>
    <property type="match status" value="1"/>
</dbReference>
<dbReference type="FunFam" id="2.40.30.10:FF:000001">
    <property type="entry name" value="Elongation factor Tu"/>
    <property type="match status" value="1"/>
</dbReference>
<dbReference type="FunFam" id="3.40.50.300:FF:000003">
    <property type="entry name" value="Elongation factor Tu"/>
    <property type="match status" value="1"/>
</dbReference>
<dbReference type="Gene3D" id="3.40.50.300">
    <property type="entry name" value="P-loop containing nucleotide triphosphate hydrolases"/>
    <property type="match status" value="1"/>
</dbReference>
<dbReference type="Gene3D" id="2.40.30.10">
    <property type="entry name" value="Translation factors"/>
    <property type="match status" value="2"/>
</dbReference>
<dbReference type="HAMAP" id="MF_00118_B">
    <property type="entry name" value="EF_Tu_B"/>
    <property type="match status" value="1"/>
</dbReference>
<dbReference type="InterPro" id="IPR041709">
    <property type="entry name" value="EF-Tu_GTP-bd"/>
</dbReference>
<dbReference type="InterPro" id="IPR050055">
    <property type="entry name" value="EF-Tu_GTPase"/>
</dbReference>
<dbReference type="InterPro" id="IPR004161">
    <property type="entry name" value="EFTu-like_2"/>
</dbReference>
<dbReference type="InterPro" id="IPR033720">
    <property type="entry name" value="EFTU_2"/>
</dbReference>
<dbReference type="InterPro" id="IPR031157">
    <property type="entry name" value="G_TR_CS"/>
</dbReference>
<dbReference type="InterPro" id="IPR027417">
    <property type="entry name" value="P-loop_NTPase"/>
</dbReference>
<dbReference type="InterPro" id="IPR005225">
    <property type="entry name" value="Small_GTP-bd"/>
</dbReference>
<dbReference type="InterPro" id="IPR000795">
    <property type="entry name" value="T_Tr_GTP-bd_dom"/>
</dbReference>
<dbReference type="InterPro" id="IPR009000">
    <property type="entry name" value="Transl_B-barrel_sf"/>
</dbReference>
<dbReference type="InterPro" id="IPR009001">
    <property type="entry name" value="Transl_elong_EF1A/Init_IF2_C"/>
</dbReference>
<dbReference type="InterPro" id="IPR004541">
    <property type="entry name" value="Transl_elong_EFTu/EF1A_bac/org"/>
</dbReference>
<dbReference type="InterPro" id="IPR004160">
    <property type="entry name" value="Transl_elong_EFTu/EF1A_C"/>
</dbReference>
<dbReference type="NCBIfam" id="TIGR00485">
    <property type="entry name" value="EF-Tu"/>
    <property type="match status" value="1"/>
</dbReference>
<dbReference type="NCBIfam" id="NF000766">
    <property type="entry name" value="PRK00049.1"/>
    <property type="match status" value="1"/>
</dbReference>
<dbReference type="NCBIfam" id="NF009372">
    <property type="entry name" value="PRK12735.1"/>
    <property type="match status" value="1"/>
</dbReference>
<dbReference type="NCBIfam" id="NF009373">
    <property type="entry name" value="PRK12736.1"/>
    <property type="match status" value="1"/>
</dbReference>
<dbReference type="NCBIfam" id="TIGR00231">
    <property type="entry name" value="small_GTP"/>
    <property type="match status" value="1"/>
</dbReference>
<dbReference type="PANTHER" id="PTHR43721:SF22">
    <property type="entry name" value="ELONGATION FACTOR TU, MITOCHONDRIAL"/>
    <property type="match status" value="1"/>
</dbReference>
<dbReference type="PANTHER" id="PTHR43721">
    <property type="entry name" value="ELONGATION FACTOR TU-RELATED"/>
    <property type="match status" value="1"/>
</dbReference>
<dbReference type="Pfam" id="PF00009">
    <property type="entry name" value="GTP_EFTU"/>
    <property type="match status" value="1"/>
</dbReference>
<dbReference type="Pfam" id="PF03144">
    <property type="entry name" value="GTP_EFTU_D2"/>
    <property type="match status" value="1"/>
</dbReference>
<dbReference type="Pfam" id="PF03143">
    <property type="entry name" value="GTP_EFTU_D3"/>
    <property type="match status" value="1"/>
</dbReference>
<dbReference type="PRINTS" id="PR00315">
    <property type="entry name" value="ELONGATNFCT"/>
</dbReference>
<dbReference type="SUPFAM" id="SSF50465">
    <property type="entry name" value="EF-Tu/eEF-1alpha/eIF2-gamma C-terminal domain"/>
    <property type="match status" value="1"/>
</dbReference>
<dbReference type="SUPFAM" id="SSF52540">
    <property type="entry name" value="P-loop containing nucleoside triphosphate hydrolases"/>
    <property type="match status" value="1"/>
</dbReference>
<dbReference type="SUPFAM" id="SSF50447">
    <property type="entry name" value="Translation proteins"/>
    <property type="match status" value="1"/>
</dbReference>
<dbReference type="PROSITE" id="PS00301">
    <property type="entry name" value="G_TR_1"/>
    <property type="match status" value="1"/>
</dbReference>
<dbReference type="PROSITE" id="PS51722">
    <property type="entry name" value="G_TR_2"/>
    <property type="match status" value="1"/>
</dbReference>
<name>EFTU_STRP6</name>
<organism>
    <name type="scientific">Streptococcus pyogenes serotype M6 (strain ATCC BAA-946 / MGAS10394)</name>
    <dbReference type="NCBI Taxonomy" id="286636"/>
    <lineage>
        <taxon>Bacteria</taxon>
        <taxon>Bacillati</taxon>
        <taxon>Bacillota</taxon>
        <taxon>Bacilli</taxon>
        <taxon>Lactobacillales</taxon>
        <taxon>Streptococcaceae</taxon>
        <taxon>Streptococcus</taxon>
    </lineage>
</organism>
<feature type="chain" id="PRO_0000091411" description="Elongation factor Tu">
    <location>
        <begin position="1"/>
        <end position="398"/>
    </location>
</feature>
<feature type="domain" description="tr-type G">
    <location>
        <begin position="10"/>
        <end position="207"/>
    </location>
</feature>
<feature type="region of interest" description="G1" evidence="1">
    <location>
        <begin position="19"/>
        <end position="26"/>
    </location>
</feature>
<feature type="region of interest" description="G2" evidence="1">
    <location>
        <begin position="63"/>
        <end position="67"/>
    </location>
</feature>
<feature type="region of interest" description="G3" evidence="1">
    <location>
        <begin position="84"/>
        <end position="87"/>
    </location>
</feature>
<feature type="region of interest" description="G4" evidence="1">
    <location>
        <begin position="139"/>
        <end position="142"/>
    </location>
</feature>
<feature type="region of interest" description="G5" evidence="1">
    <location>
        <begin position="177"/>
        <end position="179"/>
    </location>
</feature>
<feature type="binding site" evidence="2">
    <location>
        <begin position="19"/>
        <end position="26"/>
    </location>
    <ligand>
        <name>GTP</name>
        <dbReference type="ChEBI" id="CHEBI:37565"/>
    </ligand>
</feature>
<feature type="binding site" evidence="2">
    <location>
        <position position="26"/>
    </location>
    <ligand>
        <name>Mg(2+)</name>
        <dbReference type="ChEBI" id="CHEBI:18420"/>
    </ligand>
</feature>
<feature type="binding site" evidence="2">
    <location>
        <begin position="84"/>
        <end position="88"/>
    </location>
    <ligand>
        <name>GTP</name>
        <dbReference type="ChEBI" id="CHEBI:37565"/>
    </ligand>
</feature>
<feature type="binding site" evidence="2">
    <location>
        <begin position="139"/>
        <end position="142"/>
    </location>
    <ligand>
        <name>GTP</name>
        <dbReference type="ChEBI" id="CHEBI:37565"/>
    </ligand>
</feature>